<reference key="1">
    <citation type="submission" date="2006-12" db="EMBL/GenBank/DDBJ databases">
        <title>Complete sequence of chromosome 1 of Paracoccus denitrificans PD1222.</title>
        <authorList>
            <person name="Copeland A."/>
            <person name="Lucas S."/>
            <person name="Lapidus A."/>
            <person name="Barry K."/>
            <person name="Detter J.C."/>
            <person name="Glavina del Rio T."/>
            <person name="Hammon N."/>
            <person name="Israni S."/>
            <person name="Dalin E."/>
            <person name="Tice H."/>
            <person name="Pitluck S."/>
            <person name="Munk A.C."/>
            <person name="Brettin T."/>
            <person name="Bruce D."/>
            <person name="Han C."/>
            <person name="Tapia R."/>
            <person name="Gilna P."/>
            <person name="Schmutz J."/>
            <person name="Larimer F."/>
            <person name="Land M."/>
            <person name="Hauser L."/>
            <person name="Kyrpides N."/>
            <person name="Lykidis A."/>
            <person name="Spiro S."/>
            <person name="Richardson D.J."/>
            <person name="Moir J.W.B."/>
            <person name="Ferguson S.J."/>
            <person name="van Spanning R.J.M."/>
            <person name="Richardson P."/>
        </authorList>
    </citation>
    <scope>NUCLEOTIDE SEQUENCE [LARGE SCALE GENOMIC DNA]</scope>
    <source>
        <strain>Pd 1222</strain>
    </source>
</reference>
<organism>
    <name type="scientific">Paracoccus denitrificans (strain Pd 1222)</name>
    <dbReference type="NCBI Taxonomy" id="318586"/>
    <lineage>
        <taxon>Bacteria</taxon>
        <taxon>Pseudomonadati</taxon>
        <taxon>Pseudomonadota</taxon>
        <taxon>Alphaproteobacteria</taxon>
        <taxon>Rhodobacterales</taxon>
        <taxon>Paracoccaceae</taxon>
        <taxon>Paracoccus</taxon>
    </lineage>
</organism>
<accession>A1B5K8</accession>
<comment type="catalytic activity">
    <reaction evidence="1">
        <text>(6R)-10-formyltetrahydrofolate + 5-amino-1-(5-phospho-beta-D-ribosyl)imidazole-4-carboxamide = 5-formamido-1-(5-phospho-D-ribosyl)imidazole-4-carboxamide + (6S)-5,6,7,8-tetrahydrofolate</text>
        <dbReference type="Rhea" id="RHEA:22192"/>
        <dbReference type="ChEBI" id="CHEBI:57453"/>
        <dbReference type="ChEBI" id="CHEBI:58467"/>
        <dbReference type="ChEBI" id="CHEBI:58475"/>
        <dbReference type="ChEBI" id="CHEBI:195366"/>
        <dbReference type="EC" id="2.1.2.3"/>
    </reaction>
</comment>
<comment type="catalytic activity">
    <reaction evidence="1">
        <text>IMP + H2O = 5-formamido-1-(5-phospho-D-ribosyl)imidazole-4-carboxamide</text>
        <dbReference type="Rhea" id="RHEA:18445"/>
        <dbReference type="ChEBI" id="CHEBI:15377"/>
        <dbReference type="ChEBI" id="CHEBI:58053"/>
        <dbReference type="ChEBI" id="CHEBI:58467"/>
        <dbReference type="EC" id="3.5.4.10"/>
    </reaction>
</comment>
<comment type="pathway">
    <text evidence="1">Purine metabolism; IMP biosynthesis via de novo pathway; 5-formamido-1-(5-phospho-D-ribosyl)imidazole-4-carboxamide from 5-amino-1-(5-phospho-D-ribosyl)imidazole-4-carboxamide (10-formyl THF route): step 1/1.</text>
</comment>
<comment type="pathway">
    <text evidence="1">Purine metabolism; IMP biosynthesis via de novo pathway; IMP from 5-formamido-1-(5-phospho-D-ribosyl)imidazole-4-carboxamide: step 1/1.</text>
</comment>
<comment type="domain">
    <text evidence="1">The IMP cyclohydrolase activity resides in the N-terminal region.</text>
</comment>
<comment type="similarity">
    <text evidence="1">Belongs to the PurH family.</text>
</comment>
<dbReference type="EC" id="2.1.2.3" evidence="1"/>
<dbReference type="EC" id="3.5.4.10" evidence="1"/>
<dbReference type="EMBL" id="CP000489">
    <property type="protein sequence ID" value="ABL70802.1"/>
    <property type="molecule type" value="Genomic_DNA"/>
</dbReference>
<dbReference type="RefSeq" id="WP_011748993.1">
    <property type="nucleotide sequence ID" value="NC_008686.1"/>
</dbReference>
<dbReference type="SMR" id="A1B5K8"/>
<dbReference type="STRING" id="318586.Pden_2718"/>
<dbReference type="EnsemblBacteria" id="ABL70802">
    <property type="protein sequence ID" value="ABL70802"/>
    <property type="gene ID" value="Pden_2718"/>
</dbReference>
<dbReference type="GeneID" id="93451115"/>
<dbReference type="KEGG" id="pde:Pden_2718"/>
<dbReference type="eggNOG" id="COG0138">
    <property type="taxonomic scope" value="Bacteria"/>
</dbReference>
<dbReference type="HOGENOM" id="CLU_016316_5_2_5"/>
<dbReference type="OrthoDB" id="9802065at2"/>
<dbReference type="UniPathway" id="UPA00074">
    <property type="reaction ID" value="UER00133"/>
</dbReference>
<dbReference type="UniPathway" id="UPA00074">
    <property type="reaction ID" value="UER00135"/>
</dbReference>
<dbReference type="Proteomes" id="UP000000361">
    <property type="component" value="Chromosome 1"/>
</dbReference>
<dbReference type="GO" id="GO:0005829">
    <property type="term" value="C:cytosol"/>
    <property type="evidence" value="ECO:0007669"/>
    <property type="project" value="TreeGrafter"/>
</dbReference>
<dbReference type="GO" id="GO:0003937">
    <property type="term" value="F:IMP cyclohydrolase activity"/>
    <property type="evidence" value="ECO:0007669"/>
    <property type="project" value="UniProtKB-UniRule"/>
</dbReference>
<dbReference type="GO" id="GO:0004643">
    <property type="term" value="F:phosphoribosylaminoimidazolecarboxamide formyltransferase activity"/>
    <property type="evidence" value="ECO:0007669"/>
    <property type="project" value="UniProtKB-UniRule"/>
</dbReference>
<dbReference type="GO" id="GO:0006189">
    <property type="term" value="P:'de novo' IMP biosynthetic process"/>
    <property type="evidence" value="ECO:0007669"/>
    <property type="project" value="UniProtKB-UniRule"/>
</dbReference>
<dbReference type="CDD" id="cd01421">
    <property type="entry name" value="IMPCH"/>
    <property type="match status" value="1"/>
</dbReference>
<dbReference type="FunFam" id="3.40.140.20:FF:000001">
    <property type="entry name" value="Bifunctional purine biosynthesis protein PurH"/>
    <property type="match status" value="1"/>
</dbReference>
<dbReference type="FunFam" id="3.40.140.20:FF:000002">
    <property type="entry name" value="Bifunctional purine biosynthesis protein PurH"/>
    <property type="match status" value="1"/>
</dbReference>
<dbReference type="FunFam" id="3.40.50.1380:FF:000001">
    <property type="entry name" value="Bifunctional purine biosynthesis protein PurH"/>
    <property type="match status" value="1"/>
</dbReference>
<dbReference type="Gene3D" id="3.40.140.20">
    <property type="match status" value="2"/>
</dbReference>
<dbReference type="Gene3D" id="3.40.50.1380">
    <property type="entry name" value="Methylglyoxal synthase-like domain"/>
    <property type="match status" value="1"/>
</dbReference>
<dbReference type="HAMAP" id="MF_00139">
    <property type="entry name" value="PurH"/>
    <property type="match status" value="1"/>
</dbReference>
<dbReference type="InterPro" id="IPR024051">
    <property type="entry name" value="AICAR_Tfase_dup_dom_sf"/>
</dbReference>
<dbReference type="InterPro" id="IPR016193">
    <property type="entry name" value="Cytidine_deaminase-like"/>
</dbReference>
<dbReference type="InterPro" id="IPR011607">
    <property type="entry name" value="MGS-like_dom"/>
</dbReference>
<dbReference type="InterPro" id="IPR036914">
    <property type="entry name" value="MGS-like_dom_sf"/>
</dbReference>
<dbReference type="InterPro" id="IPR002695">
    <property type="entry name" value="PurH-like"/>
</dbReference>
<dbReference type="NCBIfam" id="NF002049">
    <property type="entry name" value="PRK00881.1"/>
    <property type="match status" value="1"/>
</dbReference>
<dbReference type="NCBIfam" id="TIGR00355">
    <property type="entry name" value="purH"/>
    <property type="match status" value="1"/>
</dbReference>
<dbReference type="PANTHER" id="PTHR11692:SF0">
    <property type="entry name" value="BIFUNCTIONAL PURINE BIOSYNTHESIS PROTEIN ATIC"/>
    <property type="match status" value="1"/>
</dbReference>
<dbReference type="PANTHER" id="PTHR11692">
    <property type="entry name" value="BIFUNCTIONAL PURINE BIOSYNTHESIS PROTEIN PURH"/>
    <property type="match status" value="1"/>
</dbReference>
<dbReference type="Pfam" id="PF01808">
    <property type="entry name" value="AICARFT_IMPCHas"/>
    <property type="match status" value="1"/>
</dbReference>
<dbReference type="Pfam" id="PF02142">
    <property type="entry name" value="MGS"/>
    <property type="match status" value="1"/>
</dbReference>
<dbReference type="PIRSF" id="PIRSF000414">
    <property type="entry name" value="AICARFT_IMPCHas"/>
    <property type="match status" value="1"/>
</dbReference>
<dbReference type="SMART" id="SM00798">
    <property type="entry name" value="AICARFT_IMPCHas"/>
    <property type="match status" value="1"/>
</dbReference>
<dbReference type="SMART" id="SM00851">
    <property type="entry name" value="MGS"/>
    <property type="match status" value="1"/>
</dbReference>
<dbReference type="SUPFAM" id="SSF53927">
    <property type="entry name" value="Cytidine deaminase-like"/>
    <property type="match status" value="1"/>
</dbReference>
<dbReference type="SUPFAM" id="SSF52335">
    <property type="entry name" value="Methylglyoxal synthase-like"/>
    <property type="match status" value="1"/>
</dbReference>
<dbReference type="PROSITE" id="PS51855">
    <property type="entry name" value="MGS"/>
    <property type="match status" value="1"/>
</dbReference>
<protein>
    <recommendedName>
        <fullName evidence="1">Bifunctional purine biosynthesis protein PurH</fullName>
    </recommendedName>
    <domain>
        <recommendedName>
            <fullName evidence="1">Phosphoribosylaminoimidazolecarboxamide formyltransferase</fullName>
            <ecNumber evidence="1">2.1.2.3</ecNumber>
        </recommendedName>
        <alternativeName>
            <fullName evidence="1">AICAR transformylase</fullName>
        </alternativeName>
    </domain>
    <domain>
        <recommendedName>
            <fullName evidence="1">IMP cyclohydrolase</fullName>
            <ecNumber evidence="1">3.5.4.10</ecNumber>
        </recommendedName>
        <alternativeName>
            <fullName evidence="1">ATIC</fullName>
        </alternativeName>
        <alternativeName>
            <fullName evidence="1">IMP synthase</fullName>
        </alternativeName>
        <alternativeName>
            <fullName evidence="1">Inosinicase</fullName>
        </alternativeName>
    </domain>
</protein>
<keyword id="KW-0378">Hydrolase</keyword>
<keyword id="KW-0511">Multifunctional enzyme</keyword>
<keyword id="KW-0658">Purine biosynthesis</keyword>
<keyword id="KW-1185">Reference proteome</keyword>
<keyword id="KW-0808">Transferase</keyword>
<proteinExistence type="inferred from homology"/>
<name>PUR9_PARDP</name>
<sequence length="529" mass="56268">MTDRIPLKRALISVSDKTGLVDFARALSARGVEILSTGGTAKTLREAGLSVVDVADVTGFPEMMDGRVKTLHPVVHGGLLALRDNDEHMAAAKSHRIGMIDLLVVNLYPFEATVAKGAAYDDCIENIDIGGPAMIRAAAKNHAFVTVVVDVQDYAAVLAELDANDDRTGLAFRQRQAQIAYARTAAYDAAVSTWMAGAIGEETPRRRSFSGQLAQSLRYGENPHQSAAFYRDGSDRPGVATARQWQGKELSYNNINDTDAAFELVAEFDPAEGPAVAIIKHANPCGVARGDSAVDAYLRAFDCDRTSAFGGIIALNTTLDGETAQAITEIFTEVVIAPDATDEAKEIFAAKKNLRLLTTGGLPDPAAPGLAFRQVAGGFLVQGRDNGRILRADLKVVTKRQPTDQELADLLFAWTVAKHVKSNAIVYARDLATVGIGAGQMSRVDSTRIGKRKSEDMAEALGLAQALTIGSSVASDAFFPFADGVEALAAAGARAVIQPGGSMRDAEVIEAADRLGLAMVFTGQRHFRH</sequence>
<feature type="chain" id="PRO_1000057901" description="Bifunctional purine biosynthesis protein PurH">
    <location>
        <begin position="1"/>
        <end position="529"/>
    </location>
</feature>
<feature type="domain" description="MGS-like" evidence="2">
    <location>
        <begin position="3"/>
        <end position="149"/>
    </location>
</feature>
<evidence type="ECO:0000255" key="1">
    <source>
        <dbReference type="HAMAP-Rule" id="MF_00139"/>
    </source>
</evidence>
<evidence type="ECO:0000255" key="2">
    <source>
        <dbReference type="PROSITE-ProRule" id="PRU01202"/>
    </source>
</evidence>
<gene>
    <name evidence="1" type="primary">purH</name>
    <name type="ordered locus">Pden_2718</name>
</gene>